<protein>
    <recommendedName>
        <fullName evidence="1">Protein TusB</fullName>
    </recommendedName>
    <alternativeName>
        <fullName evidence="1">tRNA 2-thiouridine synthesizing protein B</fullName>
    </alternativeName>
</protein>
<proteinExistence type="inferred from homology"/>
<organism>
    <name type="scientific">Salmonella arizonae (strain ATCC BAA-731 / CDC346-86 / RSK2980)</name>
    <dbReference type="NCBI Taxonomy" id="41514"/>
    <lineage>
        <taxon>Bacteria</taxon>
        <taxon>Pseudomonadati</taxon>
        <taxon>Pseudomonadota</taxon>
        <taxon>Gammaproteobacteria</taxon>
        <taxon>Enterobacterales</taxon>
        <taxon>Enterobacteriaceae</taxon>
        <taxon>Salmonella</taxon>
    </lineage>
</organism>
<gene>
    <name evidence="1" type="primary">tusB</name>
    <name type="ordered locus">SARI_04177</name>
</gene>
<feature type="chain" id="PRO_1000087819" description="Protein TusB">
    <location>
        <begin position="1"/>
        <end position="95"/>
    </location>
</feature>
<reference key="1">
    <citation type="submission" date="2007-11" db="EMBL/GenBank/DDBJ databases">
        <authorList>
            <consortium name="The Salmonella enterica serovar Arizonae Genome Sequencing Project"/>
            <person name="McClelland M."/>
            <person name="Sanderson E.K."/>
            <person name="Porwollik S."/>
            <person name="Spieth J."/>
            <person name="Clifton W.S."/>
            <person name="Fulton R."/>
            <person name="Chunyan W."/>
            <person name="Wollam A."/>
            <person name="Shah N."/>
            <person name="Pepin K."/>
            <person name="Bhonagiri V."/>
            <person name="Nash W."/>
            <person name="Johnson M."/>
            <person name="Thiruvilangam P."/>
            <person name="Wilson R."/>
        </authorList>
    </citation>
    <scope>NUCLEOTIDE SEQUENCE [LARGE SCALE GENOMIC DNA]</scope>
    <source>
        <strain>ATCC BAA-731 / CDC346-86 / RSK2980</strain>
    </source>
</reference>
<dbReference type="EMBL" id="CP000880">
    <property type="protein sequence ID" value="ABX23966.1"/>
    <property type="molecule type" value="Genomic_DNA"/>
</dbReference>
<dbReference type="SMR" id="A9MN36"/>
<dbReference type="STRING" id="41514.SARI_04177"/>
<dbReference type="KEGG" id="ses:SARI_04177"/>
<dbReference type="HOGENOM" id="CLU_166087_2_1_6"/>
<dbReference type="Proteomes" id="UP000002084">
    <property type="component" value="Chromosome"/>
</dbReference>
<dbReference type="GO" id="GO:1990228">
    <property type="term" value="C:sulfurtransferase complex"/>
    <property type="evidence" value="ECO:0007669"/>
    <property type="project" value="TreeGrafter"/>
</dbReference>
<dbReference type="GO" id="GO:0002143">
    <property type="term" value="P:tRNA wobble position uridine thiolation"/>
    <property type="evidence" value="ECO:0007669"/>
    <property type="project" value="InterPro"/>
</dbReference>
<dbReference type="FunFam" id="3.40.1260.10:FF:000002">
    <property type="entry name" value="Sulfurtransferase TusB"/>
    <property type="match status" value="1"/>
</dbReference>
<dbReference type="Gene3D" id="3.40.1260.10">
    <property type="entry name" value="DsrEFH-like"/>
    <property type="match status" value="1"/>
</dbReference>
<dbReference type="HAMAP" id="MF_01564">
    <property type="entry name" value="Thiourid_synth_B"/>
    <property type="match status" value="1"/>
</dbReference>
<dbReference type="InterPro" id="IPR027396">
    <property type="entry name" value="DsrEFH-like"/>
</dbReference>
<dbReference type="InterPro" id="IPR023526">
    <property type="entry name" value="Sulphur_relay_TusB"/>
</dbReference>
<dbReference type="InterPro" id="IPR007215">
    <property type="entry name" value="Sulphur_relay_TusB/DsrH"/>
</dbReference>
<dbReference type="NCBIfam" id="NF010035">
    <property type="entry name" value="PRK13510.1"/>
    <property type="match status" value="1"/>
</dbReference>
<dbReference type="NCBIfam" id="TIGR03011">
    <property type="entry name" value="sulf_tusB_dsrH"/>
    <property type="match status" value="1"/>
</dbReference>
<dbReference type="PANTHER" id="PTHR37526">
    <property type="entry name" value="PROTEIN TUSB"/>
    <property type="match status" value="1"/>
</dbReference>
<dbReference type="PANTHER" id="PTHR37526:SF1">
    <property type="entry name" value="PROTEIN TUSB"/>
    <property type="match status" value="1"/>
</dbReference>
<dbReference type="Pfam" id="PF04077">
    <property type="entry name" value="DsrH"/>
    <property type="match status" value="1"/>
</dbReference>
<dbReference type="SUPFAM" id="SSF75169">
    <property type="entry name" value="DsrEFH-like"/>
    <property type="match status" value="1"/>
</dbReference>
<comment type="function">
    <text evidence="1">Part of a sulfur-relay system required for 2-thiolation of 5-methylaminomethyl-2-thiouridine (mnm(5)s(2)U) at tRNA wobble positions.</text>
</comment>
<comment type="subunit">
    <text evidence="1">Heterohexamer, formed by a dimer of trimers. The hexameric TusBCD complex contains 2 copies each of TusB, TusC and TusD. The TusBCD complex interacts with TusE.</text>
</comment>
<comment type="subcellular location">
    <subcellularLocation>
        <location evidence="1">Cytoplasm</location>
    </subcellularLocation>
</comment>
<comment type="similarity">
    <text evidence="1">Belongs to the DsrH/TusB family.</text>
</comment>
<sequence length="95" mass="10532">MLHTLPHCASSVDFPALLRLLKEGDALLLLQDGVTVAIEGNRFLESLRDAPITVYALKEDIDARGLGGQISDSVVRVDYTEFVRLTVKYANQMAW</sequence>
<name>TUSB_SALAR</name>
<accession>A9MN36</accession>
<evidence type="ECO:0000255" key="1">
    <source>
        <dbReference type="HAMAP-Rule" id="MF_01564"/>
    </source>
</evidence>
<keyword id="KW-0963">Cytoplasm</keyword>
<keyword id="KW-1185">Reference proteome</keyword>
<keyword id="KW-0819">tRNA processing</keyword>